<evidence type="ECO:0000255" key="1">
    <source>
        <dbReference type="HAMAP-Rule" id="MF_00377"/>
    </source>
</evidence>
<feature type="chain" id="PRO_0000114255" description="Chromosomal replication initiator protein DnaA">
    <location>
        <begin position="1"/>
        <end position="468"/>
    </location>
</feature>
<feature type="region of interest" description="Domain I, interacts with DnaA modulators" evidence="1">
    <location>
        <begin position="1"/>
        <end position="90"/>
    </location>
</feature>
<feature type="region of interest" description="Domain II" evidence="1">
    <location>
        <begin position="91"/>
        <end position="126"/>
    </location>
</feature>
<feature type="region of interest" description="Domain III, AAA+ region" evidence="1">
    <location>
        <begin position="127"/>
        <end position="348"/>
    </location>
</feature>
<feature type="region of interest" description="Domain IV, binds dsDNA" evidence="1">
    <location>
        <begin position="349"/>
        <end position="468"/>
    </location>
</feature>
<feature type="binding site" evidence="1">
    <location>
        <position position="171"/>
    </location>
    <ligand>
        <name>ATP</name>
        <dbReference type="ChEBI" id="CHEBI:30616"/>
    </ligand>
</feature>
<feature type="binding site" evidence="1">
    <location>
        <position position="173"/>
    </location>
    <ligand>
        <name>ATP</name>
        <dbReference type="ChEBI" id="CHEBI:30616"/>
    </ligand>
</feature>
<feature type="binding site" evidence="1">
    <location>
        <position position="174"/>
    </location>
    <ligand>
        <name>ATP</name>
        <dbReference type="ChEBI" id="CHEBI:30616"/>
    </ligand>
</feature>
<feature type="binding site" evidence="1">
    <location>
        <position position="175"/>
    </location>
    <ligand>
        <name>ATP</name>
        <dbReference type="ChEBI" id="CHEBI:30616"/>
    </ligand>
</feature>
<organism>
    <name type="scientific">Ruegeria pomeroyi (strain ATCC 700808 / DSM 15171 / DSS-3)</name>
    <name type="common">Silicibacter pomeroyi</name>
    <dbReference type="NCBI Taxonomy" id="246200"/>
    <lineage>
        <taxon>Bacteria</taxon>
        <taxon>Pseudomonadati</taxon>
        <taxon>Pseudomonadota</taxon>
        <taxon>Alphaproteobacteria</taxon>
        <taxon>Rhodobacterales</taxon>
        <taxon>Roseobacteraceae</taxon>
        <taxon>Ruegeria</taxon>
    </lineage>
</organism>
<accession>Q5LWV4</accession>
<protein>
    <recommendedName>
        <fullName evidence="1">Chromosomal replication initiator protein DnaA</fullName>
    </recommendedName>
</protein>
<gene>
    <name evidence="1" type="primary">dnaA</name>
    <name type="ordered locus">SPO0149</name>
</gene>
<reference key="1">
    <citation type="journal article" date="2004" name="Nature">
        <title>Genome sequence of Silicibacter pomeroyi reveals adaptations to the marine environment.</title>
        <authorList>
            <person name="Moran M.A."/>
            <person name="Buchan A."/>
            <person name="Gonzalez J.M."/>
            <person name="Heidelberg J.F."/>
            <person name="Whitman W.B."/>
            <person name="Kiene R.P."/>
            <person name="Henriksen J.R."/>
            <person name="King G.M."/>
            <person name="Belas R."/>
            <person name="Fuqua C."/>
            <person name="Brinkac L.M."/>
            <person name="Lewis M."/>
            <person name="Johri S."/>
            <person name="Weaver B."/>
            <person name="Pai G."/>
            <person name="Eisen J.A."/>
            <person name="Rahe E."/>
            <person name="Sheldon W.M."/>
            <person name="Ye W."/>
            <person name="Miller T.R."/>
            <person name="Carlton J."/>
            <person name="Rasko D.A."/>
            <person name="Paulsen I.T."/>
            <person name="Ren Q."/>
            <person name="Daugherty S.C."/>
            <person name="DeBoy R.T."/>
            <person name="Dodson R.J."/>
            <person name="Durkin A.S."/>
            <person name="Madupu R."/>
            <person name="Nelson W.C."/>
            <person name="Sullivan S.A."/>
            <person name="Rosovitz M.J."/>
            <person name="Haft D.H."/>
            <person name="Selengut J."/>
            <person name="Ward N."/>
        </authorList>
    </citation>
    <scope>NUCLEOTIDE SEQUENCE [LARGE SCALE GENOMIC DNA]</scope>
    <source>
        <strain>ATCC 700808 / DSM 15171 / DSS-3</strain>
    </source>
</reference>
<reference key="2">
    <citation type="journal article" date="2014" name="Stand. Genomic Sci.">
        <title>An updated genome annotation for the model marine bacterium Ruegeria pomeroyi DSS-3.</title>
        <authorList>
            <person name="Rivers A.R."/>
            <person name="Smith C.B."/>
            <person name="Moran M.A."/>
        </authorList>
    </citation>
    <scope>GENOME REANNOTATION</scope>
    <source>
        <strain>ATCC 700808 / DSM 15171 / DSS-3</strain>
    </source>
</reference>
<keyword id="KW-0067">ATP-binding</keyword>
<keyword id="KW-0963">Cytoplasm</keyword>
<keyword id="KW-0235">DNA replication</keyword>
<keyword id="KW-0238">DNA-binding</keyword>
<keyword id="KW-0446">Lipid-binding</keyword>
<keyword id="KW-0547">Nucleotide-binding</keyword>
<keyword id="KW-1185">Reference proteome</keyword>
<dbReference type="EMBL" id="CP000031">
    <property type="protein sequence ID" value="AAV93477.1"/>
    <property type="molecule type" value="Genomic_DNA"/>
</dbReference>
<dbReference type="RefSeq" id="WP_011045920.1">
    <property type="nucleotide sequence ID" value="NC_003911.12"/>
</dbReference>
<dbReference type="SMR" id="Q5LWV4"/>
<dbReference type="STRING" id="246200.SPO0149"/>
<dbReference type="PaxDb" id="246200-SPO0149"/>
<dbReference type="KEGG" id="sil:SPO0149"/>
<dbReference type="eggNOG" id="COG0593">
    <property type="taxonomic scope" value="Bacteria"/>
</dbReference>
<dbReference type="HOGENOM" id="CLU_026910_3_0_5"/>
<dbReference type="Proteomes" id="UP000001023">
    <property type="component" value="Chromosome"/>
</dbReference>
<dbReference type="GO" id="GO:0005737">
    <property type="term" value="C:cytoplasm"/>
    <property type="evidence" value="ECO:0007669"/>
    <property type="project" value="UniProtKB-SubCell"/>
</dbReference>
<dbReference type="GO" id="GO:0005886">
    <property type="term" value="C:plasma membrane"/>
    <property type="evidence" value="ECO:0007669"/>
    <property type="project" value="TreeGrafter"/>
</dbReference>
<dbReference type="GO" id="GO:0005524">
    <property type="term" value="F:ATP binding"/>
    <property type="evidence" value="ECO:0007669"/>
    <property type="project" value="UniProtKB-UniRule"/>
</dbReference>
<dbReference type="GO" id="GO:0016887">
    <property type="term" value="F:ATP hydrolysis activity"/>
    <property type="evidence" value="ECO:0007669"/>
    <property type="project" value="InterPro"/>
</dbReference>
<dbReference type="GO" id="GO:0003688">
    <property type="term" value="F:DNA replication origin binding"/>
    <property type="evidence" value="ECO:0007669"/>
    <property type="project" value="UniProtKB-UniRule"/>
</dbReference>
<dbReference type="GO" id="GO:0008289">
    <property type="term" value="F:lipid binding"/>
    <property type="evidence" value="ECO:0007669"/>
    <property type="project" value="UniProtKB-KW"/>
</dbReference>
<dbReference type="GO" id="GO:0006270">
    <property type="term" value="P:DNA replication initiation"/>
    <property type="evidence" value="ECO:0007669"/>
    <property type="project" value="UniProtKB-UniRule"/>
</dbReference>
<dbReference type="GO" id="GO:0006275">
    <property type="term" value="P:regulation of DNA replication"/>
    <property type="evidence" value="ECO:0007669"/>
    <property type="project" value="UniProtKB-UniRule"/>
</dbReference>
<dbReference type="CDD" id="cd00009">
    <property type="entry name" value="AAA"/>
    <property type="match status" value="1"/>
</dbReference>
<dbReference type="CDD" id="cd06571">
    <property type="entry name" value="Bac_DnaA_C"/>
    <property type="match status" value="1"/>
</dbReference>
<dbReference type="FunFam" id="3.40.50.300:FF:000668">
    <property type="entry name" value="Chromosomal replication initiator protein DnaA"/>
    <property type="match status" value="1"/>
</dbReference>
<dbReference type="Gene3D" id="1.10.1750.10">
    <property type="match status" value="1"/>
</dbReference>
<dbReference type="Gene3D" id="1.10.8.60">
    <property type="match status" value="1"/>
</dbReference>
<dbReference type="Gene3D" id="3.30.300.180">
    <property type="match status" value="1"/>
</dbReference>
<dbReference type="Gene3D" id="3.40.50.300">
    <property type="entry name" value="P-loop containing nucleotide triphosphate hydrolases"/>
    <property type="match status" value="1"/>
</dbReference>
<dbReference type="HAMAP" id="MF_00377">
    <property type="entry name" value="DnaA_bact"/>
    <property type="match status" value="1"/>
</dbReference>
<dbReference type="InterPro" id="IPR003593">
    <property type="entry name" value="AAA+_ATPase"/>
</dbReference>
<dbReference type="InterPro" id="IPR001957">
    <property type="entry name" value="Chromosome_initiator_DnaA"/>
</dbReference>
<dbReference type="InterPro" id="IPR020591">
    <property type="entry name" value="Chromosome_initiator_DnaA-like"/>
</dbReference>
<dbReference type="InterPro" id="IPR018312">
    <property type="entry name" value="Chromosome_initiator_DnaA_CS"/>
</dbReference>
<dbReference type="InterPro" id="IPR013159">
    <property type="entry name" value="DnaA_C"/>
</dbReference>
<dbReference type="InterPro" id="IPR013317">
    <property type="entry name" value="DnaA_dom"/>
</dbReference>
<dbReference type="InterPro" id="IPR024633">
    <property type="entry name" value="DnaA_N_dom"/>
</dbReference>
<dbReference type="InterPro" id="IPR038454">
    <property type="entry name" value="DnaA_N_sf"/>
</dbReference>
<dbReference type="InterPro" id="IPR027417">
    <property type="entry name" value="P-loop_NTPase"/>
</dbReference>
<dbReference type="InterPro" id="IPR010921">
    <property type="entry name" value="Trp_repressor/repl_initiator"/>
</dbReference>
<dbReference type="NCBIfam" id="TIGR00362">
    <property type="entry name" value="DnaA"/>
    <property type="match status" value="1"/>
</dbReference>
<dbReference type="PANTHER" id="PTHR30050">
    <property type="entry name" value="CHROMOSOMAL REPLICATION INITIATOR PROTEIN DNAA"/>
    <property type="match status" value="1"/>
</dbReference>
<dbReference type="PANTHER" id="PTHR30050:SF2">
    <property type="entry name" value="CHROMOSOMAL REPLICATION INITIATOR PROTEIN DNAA"/>
    <property type="match status" value="1"/>
</dbReference>
<dbReference type="Pfam" id="PF00308">
    <property type="entry name" value="Bac_DnaA"/>
    <property type="match status" value="1"/>
</dbReference>
<dbReference type="Pfam" id="PF08299">
    <property type="entry name" value="Bac_DnaA_C"/>
    <property type="match status" value="1"/>
</dbReference>
<dbReference type="Pfam" id="PF11638">
    <property type="entry name" value="DnaA_N"/>
    <property type="match status" value="1"/>
</dbReference>
<dbReference type="PRINTS" id="PR00051">
    <property type="entry name" value="DNAA"/>
</dbReference>
<dbReference type="SMART" id="SM00382">
    <property type="entry name" value="AAA"/>
    <property type="match status" value="1"/>
</dbReference>
<dbReference type="SMART" id="SM00760">
    <property type="entry name" value="Bac_DnaA_C"/>
    <property type="match status" value="1"/>
</dbReference>
<dbReference type="SUPFAM" id="SSF52540">
    <property type="entry name" value="P-loop containing nucleoside triphosphate hydrolases"/>
    <property type="match status" value="1"/>
</dbReference>
<dbReference type="SUPFAM" id="SSF48295">
    <property type="entry name" value="TrpR-like"/>
    <property type="match status" value="1"/>
</dbReference>
<dbReference type="PROSITE" id="PS01008">
    <property type="entry name" value="DNAA"/>
    <property type="match status" value="1"/>
</dbReference>
<proteinExistence type="inferred from homology"/>
<name>DNAA_RUEPO</name>
<comment type="function">
    <text evidence="1">Plays an essential role in the initiation and regulation of chromosomal replication. ATP-DnaA binds to the origin of replication (oriC) to initiate formation of the DNA replication initiation complex once per cell cycle. Binds the DnaA box (a 9 base pair repeat at the origin) and separates the double-stranded (ds)DNA. Forms a right-handed helical filament on oriC DNA; dsDNA binds to the exterior of the filament while single-stranded (ss)DNA is stabiized in the filament's interior. The ATP-DnaA-oriC complex binds and stabilizes one strand of the AT-rich DNA unwinding element (DUE), permitting loading of DNA polymerase. After initiation quickly degrades to an ADP-DnaA complex that is not apt for DNA replication. Binds acidic phospholipids.</text>
</comment>
<comment type="subunit">
    <text evidence="1">Oligomerizes as a right-handed, spiral filament on DNA at oriC.</text>
</comment>
<comment type="subcellular location">
    <subcellularLocation>
        <location evidence="1">Cytoplasm</location>
    </subcellularLocation>
</comment>
<comment type="domain">
    <text evidence="1">Domain I is involved in oligomerization and binding regulators, domain II is flexibile and of varying length in different bacteria, domain III forms the AAA+ region, while domain IV binds dsDNA.</text>
</comment>
<comment type="similarity">
    <text evidence="1">Belongs to the DnaA family.</text>
</comment>
<sequence>MTQEKWGLLCQKLLKTVGQNNFTTWIEPLEFQALENGVAVFTVPTNFMGNYVSQNFSDLILYELNNAGEAVQRLAFRVAANSPMRPARAARPAAAAAAAAAAVEAPQVSAPRATDTSDVLDGLQAAPLDPRFTFDSFVVGKPNELAHAAARRVSEGGPVTFNPLVLYGGVGLGKTHLMHAIAWELKVKRPELNVLYLSAEQFMYRFVQALRERRMMDFKHLFRSVDVLMVDDVQFIAGKDSTQEEFFHTFNALVDQNKQIIISADRAPGEIKDLEDRVKSRLQCGLVVDLHPTDYELRLGILQTKVQMYRTTYPDLVIADGVLEFLAHRISTNVRVLEGALTRLFAFASLVGREIDMELTQDCLADVLRASERKITVEEIQRKVSDYYNIRLSDIIGPKRLRSYARPRQVAMYLCKQLTSRSLPEIGRRFGGRDHTTVMHGVKRIEELKLTDGQIAEDVEMLRRALEA</sequence>